<gene>
    <name type="primary">dia2</name>
    <name type="ORF">DDB_G0291253</name>
</gene>
<reference key="1">
    <citation type="journal article" date="1998" name="Biochem. Biophys. Res. Commun.">
        <title>Underexpression of a novel gene, dia2, impairs the transition of Dictyostelium cells from growth to differentiation.</title>
        <authorList>
            <person name="Chae S.-C."/>
            <person name="Inazu Y."/>
            <person name="Amagai A."/>
            <person name="Maeda Y."/>
        </authorList>
    </citation>
    <scope>NUCLEOTIDE SEQUENCE [MRNA]</scope>
    <scope>FUNCTION</scope>
    <scope>DEVELOPMENTAL STAGE</scope>
</reference>
<reference key="2">
    <citation type="journal article" date="2005" name="Nature">
        <title>The genome of the social amoeba Dictyostelium discoideum.</title>
        <authorList>
            <person name="Eichinger L."/>
            <person name="Pachebat J.A."/>
            <person name="Gloeckner G."/>
            <person name="Rajandream M.A."/>
            <person name="Sucgang R."/>
            <person name="Berriman M."/>
            <person name="Song J."/>
            <person name="Olsen R."/>
            <person name="Szafranski K."/>
            <person name="Xu Q."/>
            <person name="Tunggal B."/>
            <person name="Kummerfeld S."/>
            <person name="Madera M."/>
            <person name="Konfortov B.A."/>
            <person name="Rivero F."/>
            <person name="Bankier A.T."/>
            <person name="Lehmann R."/>
            <person name="Hamlin N."/>
            <person name="Davies R."/>
            <person name="Gaudet P."/>
            <person name="Fey P."/>
            <person name="Pilcher K."/>
            <person name="Chen G."/>
            <person name="Saunders D."/>
            <person name="Sodergren E.J."/>
            <person name="Davis P."/>
            <person name="Kerhornou A."/>
            <person name="Nie X."/>
            <person name="Hall N."/>
            <person name="Anjard C."/>
            <person name="Hemphill L."/>
            <person name="Bason N."/>
            <person name="Farbrother P."/>
            <person name="Desany B."/>
            <person name="Just E."/>
            <person name="Morio T."/>
            <person name="Rost R."/>
            <person name="Churcher C.M."/>
            <person name="Cooper J."/>
            <person name="Haydock S."/>
            <person name="van Driessche N."/>
            <person name="Cronin A."/>
            <person name="Goodhead I."/>
            <person name="Muzny D.M."/>
            <person name="Mourier T."/>
            <person name="Pain A."/>
            <person name="Lu M."/>
            <person name="Harper D."/>
            <person name="Lindsay R."/>
            <person name="Hauser H."/>
            <person name="James K.D."/>
            <person name="Quiles M."/>
            <person name="Madan Babu M."/>
            <person name="Saito T."/>
            <person name="Buchrieser C."/>
            <person name="Wardroper A."/>
            <person name="Felder M."/>
            <person name="Thangavelu M."/>
            <person name="Johnson D."/>
            <person name="Knights A."/>
            <person name="Loulseged H."/>
            <person name="Mungall K.L."/>
            <person name="Oliver K."/>
            <person name="Price C."/>
            <person name="Quail M.A."/>
            <person name="Urushihara H."/>
            <person name="Hernandez J."/>
            <person name="Rabbinowitsch E."/>
            <person name="Steffen D."/>
            <person name="Sanders M."/>
            <person name="Ma J."/>
            <person name="Kohara Y."/>
            <person name="Sharp S."/>
            <person name="Simmonds M.N."/>
            <person name="Spiegler S."/>
            <person name="Tivey A."/>
            <person name="Sugano S."/>
            <person name="White B."/>
            <person name="Walker D."/>
            <person name="Woodward J.R."/>
            <person name="Winckler T."/>
            <person name="Tanaka Y."/>
            <person name="Shaulsky G."/>
            <person name="Schleicher M."/>
            <person name="Weinstock G.M."/>
            <person name="Rosenthal A."/>
            <person name="Cox E.C."/>
            <person name="Chisholm R.L."/>
            <person name="Gibbs R.A."/>
            <person name="Loomis W.F."/>
            <person name="Platzer M."/>
            <person name="Kay R.R."/>
            <person name="Williams J.G."/>
            <person name="Dear P.H."/>
            <person name="Noegel A.A."/>
            <person name="Barrell B.G."/>
            <person name="Kuspa A."/>
        </authorList>
    </citation>
    <scope>NUCLEOTIDE SEQUENCE [LARGE SCALE GENOMIC DNA]</scope>
    <source>
        <strain>AX4</strain>
    </source>
</reference>
<reference key="3">
    <citation type="journal article" date="2008" name="Differentiation">
        <title>Involvements of a novel protein, DIA2, in cAMP signaling and spore differentiation during Dictyostelium development.</title>
        <authorList>
            <person name="Hirata K."/>
            <person name="Amagai A."/>
            <person name="Chae S.C."/>
            <person name="Hirose S."/>
            <person name="Maeda Y."/>
        </authorList>
    </citation>
    <scope>FUNCTION</scope>
    <scope>SUBCELLULAR LOCATION</scope>
    <scope>SYNTHESIS OF 77-90</scope>
    <scope>DEVELOPMENTAL STAGE</scope>
</reference>
<evidence type="ECO:0000255" key="1"/>
<evidence type="ECO:0000269" key="2">
    <source>
    </source>
</evidence>
<evidence type="ECO:0000269" key="3">
    <source>
    </source>
</evidence>
<sequence length="151" mass="16945">MKQIIRLITTLLLLSLIGITCAAVAKLHETDKKFKGVELPEKFLDDFNLEVGKLQYANLFRSKKDDITHSAGEIRIDQQGSFSRGEKKKKFKVYNLQAQTNGKSSKTVAHVEVFDTIDAKTKAEQNEVLALAKEAFTKSKDSGKLYQVIPN</sequence>
<comment type="function">
    <text evidence="2 3">Has an essential role in the initiation of differentiation. Also required for cAMP signaling.</text>
</comment>
<comment type="subcellular location">
    <subcellularLocation>
        <location evidence="2">Endoplasmic reticulum</location>
    </subcellularLocation>
    <subcellularLocation>
        <location evidence="2">Vacuole</location>
    </subcellularLocation>
    <text>During late development it changes it's location from endoplasmic reticulum to pre-spore-specific vacuoles.</text>
</comment>
<comment type="developmental stage">
    <text evidence="2 3">Accumulates in differentiating cells starved just before the PS point, while there is no detectable expression in vegetatively growing cells.</text>
</comment>
<protein>
    <recommendedName>
        <fullName>Differentiation-associated protein 2</fullName>
        <shortName>DIA-2</shortName>
    </recommendedName>
</protein>
<organism>
    <name type="scientific">Dictyostelium discoideum</name>
    <name type="common">Social amoeba</name>
    <dbReference type="NCBI Taxonomy" id="44689"/>
    <lineage>
        <taxon>Eukaryota</taxon>
        <taxon>Amoebozoa</taxon>
        <taxon>Evosea</taxon>
        <taxon>Eumycetozoa</taxon>
        <taxon>Dictyostelia</taxon>
        <taxon>Dictyosteliales</taxon>
        <taxon>Dictyosteliaceae</taxon>
        <taxon>Dictyostelium</taxon>
    </lineage>
</organism>
<dbReference type="EMBL" id="AB007027">
    <property type="protein sequence ID" value="BAA34858.1"/>
    <property type="molecule type" value="mRNA"/>
</dbReference>
<dbReference type="EMBL" id="AAFI02000177">
    <property type="protein sequence ID" value="EAL61610.1"/>
    <property type="molecule type" value="Genomic_DNA"/>
</dbReference>
<dbReference type="RefSeq" id="XP_635257.1">
    <property type="nucleotide sequence ID" value="XM_630165.1"/>
</dbReference>
<dbReference type="FunCoup" id="O96042">
    <property type="interactions" value="17"/>
</dbReference>
<dbReference type="PaxDb" id="44689-DDB0185193"/>
<dbReference type="EnsemblProtists" id="EAL61610">
    <property type="protein sequence ID" value="EAL61610"/>
    <property type="gene ID" value="DDB_G0291253"/>
</dbReference>
<dbReference type="GeneID" id="8628204"/>
<dbReference type="KEGG" id="ddi:DDB_G0291253"/>
<dbReference type="dictyBase" id="DDB_G0291253">
    <property type="gene designation" value="dia2"/>
</dbReference>
<dbReference type="VEuPathDB" id="AmoebaDB:DDB_G0291253"/>
<dbReference type="HOGENOM" id="CLU_1734893_0_0_1"/>
<dbReference type="InParanoid" id="O96042"/>
<dbReference type="PhylomeDB" id="O96042"/>
<dbReference type="PRO" id="PR:O96042"/>
<dbReference type="Proteomes" id="UP000002195">
    <property type="component" value="Chromosome 6"/>
</dbReference>
<dbReference type="GO" id="GO:0005783">
    <property type="term" value="C:endoplasmic reticulum"/>
    <property type="evidence" value="ECO:0000314"/>
    <property type="project" value="dictyBase"/>
</dbReference>
<dbReference type="GO" id="GO:0030141">
    <property type="term" value="C:secretory granule"/>
    <property type="evidence" value="ECO:0000314"/>
    <property type="project" value="dictyBase"/>
</dbReference>
<dbReference type="GO" id="GO:0005773">
    <property type="term" value="C:vacuole"/>
    <property type="evidence" value="ECO:0007669"/>
    <property type="project" value="UniProtKB-SubCell"/>
</dbReference>
<dbReference type="GO" id="GO:0140582">
    <property type="term" value="P:adenylate cyclase-activating G protein-coupled cAMP receptor signaling pathway"/>
    <property type="evidence" value="ECO:0000315"/>
    <property type="project" value="dictyBase"/>
</dbReference>
<dbReference type="GO" id="GO:0031152">
    <property type="term" value="P:aggregation involved in sorocarp development"/>
    <property type="evidence" value="ECO:0000315"/>
    <property type="project" value="dictyBase"/>
</dbReference>
<dbReference type="GO" id="GO:0030154">
    <property type="term" value="P:cell differentiation"/>
    <property type="evidence" value="ECO:0007669"/>
    <property type="project" value="UniProtKB-KW"/>
</dbReference>
<dbReference type="GO" id="GO:0031154">
    <property type="term" value="P:culmination involved in sorocarp development"/>
    <property type="evidence" value="ECO:0000315"/>
    <property type="project" value="dictyBase"/>
</dbReference>
<dbReference type="InterPro" id="IPR053358">
    <property type="entry name" value="Diff-assoc_signaling"/>
</dbReference>
<dbReference type="PANTHER" id="PTHR34261">
    <property type="entry name" value="APC REGULATOR OF WNT-SIGNALING PATHWAY-RELATED"/>
    <property type="match status" value="1"/>
</dbReference>
<dbReference type="PANTHER" id="PTHR34261:SF1">
    <property type="entry name" value="TUBULIN POLYMERIZATION-PROMOTING PROTEIN"/>
    <property type="match status" value="1"/>
</dbReference>
<proteinExistence type="evidence at transcript level"/>
<feature type="signal peptide" evidence="1">
    <location>
        <begin position="1"/>
        <end position="22"/>
    </location>
</feature>
<feature type="chain" id="PRO_0000361778" description="Differentiation-associated protein 2">
    <location>
        <begin position="23"/>
        <end position="151"/>
    </location>
</feature>
<keyword id="KW-0221">Differentiation</keyword>
<keyword id="KW-0256">Endoplasmic reticulum</keyword>
<keyword id="KW-1185">Reference proteome</keyword>
<keyword id="KW-0732">Signal</keyword>
<keyword id="KW-0926">Vacuole</keyword>
<accession>O96042</accession>
<accession>Q54EI3</accession>
<name>DIA2_DICDI</name>